<organism>
    <name type="scientific">Rattus norvegicus</name>
    <name type="common">Rat</name>
    <dbReference type="NCBI Taxonomy" id="10116"/>
    <lineage>
        <taxon>Eukaryota</taxon>
        <taxon>Metazoa</taxon>
        <taxon>Chordata</taxon>
        <taxon>Craniata</taxon>
        <taxon>Vertebrata</taxon>
        <taxon>Euteleostomi</taxon>
        <taxon>Mammalia</taxon>
        <taxon>Eutheria</taxon>
        <taxon>Euarchontoglires</taxon>
        <taxon>Glires</taxon>
        <taxon>Rodentia</taxon>
        <taxon>Myomorpha</taxon>
        <taxon>Muroidea</taxon>
        <taxon>Muridae</taxon>
        <taxon>Murinae</taxon>
        <taxon>Rattus</taxon>
    </lineage>
</organism>
<reference key="1">
    <citation type="journal article" date="2004" name="Nature">
        <title>Genome sequence of the Brown Norway rat yields insights into mammalian evolution.</title>
        <authorList>
            <person name="Gibbs R.A."/>
            <person name="Weinstock G.M."/>
            <person name="Metzker M.L."/>
            <person name="Muzny D.M."/>
            <person name="Sodergren E.J."/>
            <person name="Scherer S."/>
            <person name="Scott G."/>
            <person name="Steffen D."/>
            <person name="Worley K.C."/>
            <person name="Burch P.E."/>
            <person name="Okwuonu G."/>
            <person name="Hines S."/>
            <person name="Lewis L."/>
            <person name="Deramo C."/>
            <person name="Delgado O."/>
            <person name="Dugan-Rocha S."/>
            <person name="Miner G."/>
            <person name="Morgan M."/>
            <person name="Hawes A."/>
            <person name="Gill R."/>
            <person name="Holt R.A."/>
            <person name="Adams M.D."/>
            <person name="Amanatides P.G."/>
            <person name="Baden-Tillson H."/>
            <person name="Barnstead M."/>
            <person name="Chin S."/>
            <person name="Evans C.A."/>
            <person name="Ferriera S."/>
            <person name="Fosler C."/>
            <person name="Glodek A."/>
            <person name="Gu Z."/>
            <person name="Jennings D."/>
            <person name="Kraft C.L."/>
            <person name="Nguyen T."/>
            <person name="Pfannkoch C.M."/>
            <person name="Sitter C."/>
            <person name="Sutton G.G."/>
            <person name="Venter J.C."/>
            <person name="Woodage T."/>
            <person name="Smith D."/>
            <person name="Lee H.-M."/>
            <person name="Gustafson E."/>
            <person name="Cahill P."/>
            <person name="Kana A."/>
            <person name="Doucette-Stamm L."/>
            <person name="Weinstock K."/>
            <person name="Fechtel K."/>
            <person name="Weiss R.B."/>
            <person name="Dunn D.M."/>
            <person name="Green E.D."/>
            <person name="Blakesley R.W."/>
            <person name="Bouffard G.G."/>
            <person name="De Jong P.J."/>
            <person name="Osoegawa K."/>
            <person name="Zhu B."/>
            <person name="Marra M."/>
            <person name="Schein J."/>
            <person name="Bosdet I."/>
            <person name="Fjell C."/>
            <person name="Jones S."/>
            <person name="Krzywinski M."/>
            <person name="Mathewson C."/>
            <person name="Siddiqui A."/>
            <person name="Wye N."/>
            <person name="McPherson J."/>
            <person name="Zhao S."/>
            <person name="Fraser C.M."/>
            <person name="Shetty J."/>
            <person name="Shatsman S."/>
            <person name="Geer K."/>
            <person name="Chen Y."/>
            <person name="Abramzon S."/>
            <person name="Nierman W.C."/>
            <person name="Havlak P.H."/>
            <person name="Chen R."/>
            <person name="Durbin K.J."/>
            <person name="Egan A."/>
            <person name="Ren Y."/>
            <person name="Song X.-Z."/>
            <person name="Li B."/>
            <person name="Liu Y."/>
            <person name="Qin X."/>
            <person name="Cawley S."/>
            <person name="Cooney A.J."/>
            <person name="D'Souza L.M."/>
            <person name="Martin K."/>
            <person name="Wu J.Q."/>
            <person name="Gonzalez-Garay M.L."/>
            <person name="Jackson A.R."/>
            <person name="Kalafus K.J."/>
            <person name="McLeod M.P."/>
            <person name="Milosavljevic A."/>
            <person name="Virk D."/>
            <person name="Volkov A."/>
            <person name="Wheeler D.A."/>
            <person name="Zhang Z."/>
            <person name="Bailey J.A."/>
            <person name="Eichler E.E."/>
            <person name="Tuzun E."/>
            <person name="Birney E."/>
            <person name="Mongin E."/>
            <person name="Ureta-Vidal A."/>
            <person name="Woodwark C."/>
            <person name="Zdobnov E."/>
            <person name="Bork P."/>
            <person name="Suyama M."/>
            <person name="Torrents D."/>
            <person name="Alexandersson M."/>
            <person name="Trask B.J."/>
            <person name="Young J.M."/>
            <person name="Huang H."/>
            <person name="Wang H."/>
            <person name="Xing H."/>
            <person name="Daniels S."/>
            <person name="Gietzen D."/>
            <person name="Schmidt J."/>
            <person name="Stevens K."/>
            <person name="Vitt U."/>
            <person name="Wingrove J."/>
            <person name="Camara F."/>
            <person name="Mar Alba M."/>
            <person name="Abril J.F."/>
            <person name="Guigo R."/>
            <person name="Smit A."/>
            <person name="Dubchak I."/>
            <person name="Rubin E.M."/>
            <person name="Couronne O."/>
            <person name="Poliakov A."/>
            <person name="Huebner N."/>
            <person name="Ganten D."/>
            <person name="Goesele C."/>
            <person name="Hummel O."/>
            <person name="Kreitler T."/>
            <person name="Lee Y.-A."/>
            <person name="Monti J."/>
            <person name="Schulz H."/>
            <person name="Zimdahl H."/>
            <person name="Himmelbauer H."/>
            <person name="Lehrach H."/>
            <person name="Jacob H.J."/>
            <person name="Bromberg S."/>
            <person name="Gullings-Handley J."/>
            <person name="Jensen-Seaman M.I."/>
            <person name="Kwitek A.E."/>
            <person name="Lazar J."/>
            <person name="Pasko D."/>
            <person name="Tonellato P.J."/>
            <person name="Twigger S."/>
            <person name="Ponting C.P."/>
            <person name="Duarte J.M."/>
            <person name="Rice S."/>
            <person name="Goodstadt L."/>
            <person name="Beatson S.A."/>
            <person name="Emes R.D."/>
            <person name="Winter E.E."/>
            <person name="Webber C."/>
            <person name="Brandt P."/>
            <person name="Nyakatura G."/>
            <person name="Adetobi M."/>
            <person name="Chiaromonte F."/>
            <person name="Elnitski L."/>
            <person name="Eswara P."/>
            <person name="Hardison R.C."/>
            <person name="Hou M."/>
            <person name="Kolbe D."/>
            <person name="Makova K."/>
            <person name="Miller W."/>
            <person name="Nekrutenko A."/>
            <person name="Riemer C."/>
            <person name="Schwartz S."/>
            <person name="Taylor J."/>
            <person name="Yang S."/>
            <person name="Zhang Y."/>
            <person name="Lindpaintner K."/>
            <person name="Andrews T.D."/>
            <person name="Caccamo M."/>
            <person name="Clamp M."/>
            <person name="Clarke L."/>
            <person name="Curwen V."/>
            <person name="Durbin R.M."/>
            <person name="Eyras E."/>
            <person name="Searle S.M."/>
            <person name="Cooper G.M."/>
            <person name="Batzoglou S."/>
            <person name="Brudno M."/>
            <person name="Sidow A."/>
            <person name="Stone E.A."/>
            <person name="Payseur B.A."/>
            <person name="Bourque G."/>
            <person name="Lopez-Otin C."/>
            <person name="Puente X.S."/>
            <person name="Chakrabarti K."/>
            <person name="Chatterji S."/>
            <person name="Dewey C."/>
            <person name="Pachter L."/>
            <person name="Bray N."/>
            <person name="Yap V.B."/>
            <person name="Caspi A."/>
            <person name="Tesler G."/>
            <person name="Pevzner P.A."/>
            <person name="Haussler D."/>
            <person name="Roskin K.M."/>
            <person name="Baertsch R."/>
            <person name="Clawson H."/>
            <person name="Furey T.S."/>
            <person name="Hinrichs A.S."/>
            <person name="Karolchik D."/>
            <person name="Kent W.J."/>
            <person name="Rosenbloom K.R."/>
            <person name="Trumbower H."/>
            <person name="Weirauch M."/>
            <person name="Cooper D.N."/>
            <person name="Stenson P.D."/>
            <person name="Ma B."/>
            <person name="Brent M."/>
            <person name="Arumugam M."/>
            <person name="Shteynberg D."/>
            <person name="Copley R.R."/>
            <person name="Taylor M.S."/>
            <person name="Riethman H."/>
            <person name="Mudunuri U."/>
            <person name="Peterson J."/>
            <person name="Guyer M."/>
            <person name="Felsenfeld A."/>
            <person name="Old S."/>
            <person name="Mockrin S."/>
            <person name="Collins F.S."/>
        </authorList>
    </citation>
    <scope>NUCLEOTIDE SEQUENCE [LARGE SCALE GENOMIC DNA]</scope>
    <source>
        <strain>Brown Norway</strain>
    </source>
</reference>
<reference key="2">
    <citation type="journal article" date="2004" name="Genome Res.">
        <title>The status, quality, and expansion of the NIH full-length cDNA project: the Mammalian Gene Collection (MGC).</title>
        <authorList>
            <consortium name="The MGC Project Team"/>
        </authorList>
    </citation>
    <scope>NUCLEOTIDE SEQUENCE [LARGE SCALE MRNA]</scope>
    <source>
        <tissue>Prostate</tissue>
    </source>
</reference>
<reference key="3">
    <citation type="submission" date="1998-10" db="EMBL/GenBank/DDBJ databases">
        <authorList>
            <person name="Keen T.J."/>
            <person name="Inglehearn C.F."/>
        </authorList>
    </citation>
    <scope>NUCLEOTIDE SEQUENCE [MRNA] OF 21-211</scope>
    <source>
        <tissue>Pheochromocytoma</tissue>
    </source>
</reference>
<reference key="4">
    <citation type="journal article" date="2005" name="Exp. Cell Res.">
        <title>The cell-cell adhesion molecule EpCAM interacts directly with the tight junction protein claudin-7.</title>
        <authorList>
            <person name="Ladwein M."/>
            <person name="Pape U.F."/>
            <person name="Schmidt D.S."/>
            <person name="Schnoelzer M."/>
            <person name="Fiedler S."/>
            <person name="Langbein L."/>
            <person name="Franke W.W."/>
            <person name="Moldenhauer G."/>
            <person name="Zoeller M."/>
        </authorList>
    </citation>
    <scope>IDENTIFICATION BY MASS SPECTROMETRY</scope>
    <scope>SUBCELLULAR LOCATION</scope>
    <scope>INTERACTION WITH EPCAM</scope>
    <scope>PHOSPHORYLATION</scope>
</reference>
<sequence>MANSGLQLLGFSMAMLGWVGLIASTAIPQWQMSSYAGDNIITAQAMYKGLWMECVTQSTGMMSCKMYDSVLALPAATQATRALMIVSLVLGFLAMFVATMGMKCTRCGGDDKVKKARIAMTGGIIFIVAGLAALVACSWIGHQIVTDFYNPLTPMNIKYEFGPAIFIGWAGSALVLLGGALLSCSCPGSESKAAYRAPRSYPKSNSSKEYV</sequence>
<keyword id="KW-0965">Cell junction</keyword>
<keyword id="KW-1003">Cell membrane</keyword>
<keyword id="KW-0472">Membrane</keyword>
<keyword id="KW-0597">Phosphoprotein</keyword>
<keyword id="KW-1185">Reference proteome</keyword>
<keyword id="KW-0796">Tight junction</keyword>
<keyword id="KW-0812">Transmembrane</keyword>
<keyword id="KW-1133">Transmembrane helix</keyword>
<dbReference type="EMBL" id="AABR03074542">
    <property type="status" value="NOT_ANNOTATED_CDS"/>
    <property type="molecule type" value="Genomic_DNA"/>
</dbReference>
<dbReference type="EMBL" id="BC101892">
    <property type="protein sequence ID" value="AAI01893.1"/>
    <property type="molecule type" value="mRNA"/>
</dbReference>
<dbReference type="EMBL" id="AJ011811">
    <property type="protein sequence ID" value="CAA09790.1"/>
    <property type="molecule type" value="mRNA"/>
</dbReference>
<dbReference type="RefSeq" id="NP_113890.1">
    <property type="nucleotide sequence ID" value="NM_031702.2"/>
</dbReference>
<dbReference type="RefSeq" id="XP_006246867.1">
    <property type="nucleotide sequence ID" value="XM_006246805.3"/>
</dbReference>
<dbReference type="SMR" id="Q9Z1L1"/>
<dbReference type="FunCoup" id="Q9Z1L1">
    <property type="interactions" value="355"/>
</dbReference>
<dbReference type="STRING" id="10116.ENSRNOP00000069209"/>
<dbReference type="iPTMnet" id="Q9Z1L1"/>
<dbReference type="PhosphoSitePlus" id="Q9Z1L1"/>
<dbReference type="SwissPalm" id="Q9Z1L1"/>
<dbReference type="jPOST" id="Q9Z1L1"/>
<dbReference type="PaxDb" id="10116-ENSRNOP00000023291"/>
<dbReference type="Ensembl" id="ENSRNOT00000023291.6">
    <property type="protein sequence ID" value="ENSRNOP00000023291.4"/>
    <property type="gene ID" value="ENSRNOG00000017325.8"/>
</dbReference>
<dbReference type="GeneID" id="65132"/>
<dbReference type="KEGG" id="rno:65132"/>
<dbReference type="UCSC" id="RGD:68432">
    <property type="organism name" value="rat"/>
</dbReference>
<dbReference type="AGR" id="RGD:68432"/>
<dbReference type="CTD" id="1366"/>
<dbReference type="RGD" id="68432">
    <property type="gene designation" value="Cldn7"/>
</dbReference>
<dbReference type="eggNOG" id="ENOG502QPXX">
    <property type="taxonomic scope" value="Eukaryota"/>
</dbReference>
<dbReference type="GeneTree" id="ENSGT00940000160672"/>
<dbReference type="InParanoid" id="Q9Z1L1"/>
<dbReference type="OMA" id="ACAWCTH"/>
<dbReference type="OrthoDB" id="10025519at2759"/>
<dbReference type="PhylomeDB" id="Q9Z1L1"/>
<dbReference type="TreeFam" id="TF331936"/>
<dbReference type="PRO" id="PR:Q9Z1L1"/>
<dbReference type="Proteomes" id="UP000002494">
    <property type="component" value="Chromosome 10"/>
</dbReference>
<dbReference type="Bgee" id="ENSRNOG00000017325">
    <property type="expression patterns" value="Expressed in jejunum and 17 other cell types or tissues"/>
</dbReference>
<dbReference type="ExpressionAtlas" id="Q9Z1L1">
    <property type="expression patterns" value="baseline and differential"/>
</dbReference>
<dbReference type="GO" id="GO:0016327">
    <property type="term" value="C:apicolateral plasma membrane"/>
    <property type="evidence" value="ECO:0000266"/>
    <property type="project" value="RGD"/>
</dbReference>
<dbReference type="GO" id="GO:0016323">
    <property type="term" value="C:basolateral plasma membrane"/>
    <property type="evidence" value="ECO:0000314"/>
    <property type="project" value="RGD"/>
</dbReference>
<dbReference type="GO" id="GO:0005923">
    <property type="term" value="C:bicellular tight junction"/>
    <property type="evidence" value="ECO:0000250"/>
    <property type="project" value="UniProtKB"/>
</dbReference>
<dbReference type="GO" id="GO:0016328">
    <property type="term" value="C:lateral plasma membrane"/>
    <property type="evidence" value="ECO:0000314"/>
    <property type="project" value="RGD"/>
</dbReference>
<dbReference type="GO" id="GO:0005886">
    <property type="term" value="C:plasma membrane"/>
    <property type="evidence" value="ECO:0000266"/>
    <property type="project" value="RGD"/>
</dbReference>
<dbReference type="GO" id="GO:0050839">
    <property type="term" value="F:cell adhesion molecule binding"/>
    <property type="evidence" value="ECO:0000353"/>
    <property type="project" value="RGD"/>
</dbReference>
<dbReference type="GO" id="GO:0042802">
    <property type="term" value="F:identical protein binding"/>
    <property type="evidence" value="ECO:0000250"/>
    <property type="project" value="UniProtKB"/>
</dbReference>
<dbReference type="GO" id="GO:0019904">
    <property type="term" value="F:protein domain specific binding"/>
    <property type="evidence" value="ECO:0000353"/>
    <property type="project" value="RGD"/>
</dbReference>
<dbReference type="GO" id="GO:0005198">
    <property type="term" value="F:structural molecule activity"/>
    <property type="evidence" value="ECO:0007669"/>
    <property type="project" value="InterPro"/>
</dbReference>
<dbReference type="GO" id="GO:0070830">
    <property type="term" value="P:bicellular tight junction assembly"/>
    <property type="evidence" value="ECO:0000318"/>
    <property type="project" value="GO_Central"/>
</dbReference>
<dbReference type="GO" id="GO:0016338">
    <property type="term" value="P:calcium-independent cell-cell adhesion via plasma membrane cell-adhesion molecules"/>
    <property type="evidence" value="ECO:0000250"/>
    <property type="project" value="UniProtKB"/>
</dbReference>
<dbReference type="GO" id="GO:0007155">
    <property type="term" value="P:cell adhesion"/>
    <property type="evidence" value="ECO:0000318"/>
    <property type="project" value="GO_Central"/>
</dbReference>
<dbReference type="GO" id="GO:0043066">
    <property type="term" value="P:negative regulation of apoptotic process"/>
    <property type="evidence" value="ECO:0000314"/>
    <property type="project" value="RGD"/>
</dbReference>
<dbReference type="GO" id="GO:0007162">
    <property type="term" value="P:negative regulation of cell adhesion"/>
    <property type="evidence" value="ECO:0000314"/>
    <property type="project" value="RGD"/>
</dbReference>
<dbReference type="GO" id="GO:0031333">
    <property type="term" value="P:negative regulation of protein-containing complex assembly"/>
    <property type="evidence" value="ECO:0000314"/>
    <property type="project" value="RGD"/>
</dbReference>
<dbReference type="GO" id="GO:2000147">
    <property type="term" value="P:positive regulation of cell motility"/>
    <property type="evidence" value="ECO:0000314"/>
    <property type="project" value="RGD"/>
</dbReference>
<dbReference type="GO" id="GO:0008284">
    <property type="term" value="P:positive regulation of cell population proliferation"/>
    <property type="evidence" value="ECO:0000314"/>
    <property type="project" value="RGD"/>
</dbReference>
<dbReference type="GO" id="GO:0045471">
    <property type="term" value="P:response to ethanol"/>
    <property type="evidence" value="ECO:0000270"/>
    <property type="project" value="RGD"/>
</dbReference>
<dbReference type="FunFam" id="1.20.140.150:FF:000001">
    <property type="entry name" value="Claudin"/>
    <property type="match status" value="1"/>
</dbReference>
<dbReference type="Gene3D" id="1.20.140.150">
    <property type="match status" value="1"/>
</dbReference>
<dbReference type="InterPro" id="IPR006187">
    <property type="entry name" value="Claudin"/>
</dbReference>
<dbReference type="InterPro" id="IPR003552">
    <property type="entry name" value="Claudin7"/>
</dbReference>
<dbReference type="InterPro" id="IPR017974">
    <property type="entry name" value="Claudin_CS"/>
</dbReference>
<dbReference type="InterPro" id="IPR004031">
    <property type="entry name" value="PMP22/EMP/MP20/Claudin"/>
</dbReference>
<dbReference type="PANTHER" id="PTHR12002">
    <property type="entry name" value="CLAUDIN"/>
    <property type="match status" value="1"/>
</dbReference>
<dbReference type="Pfam" id="PF00822">
    <property type="entry name" value="PMP22_Claudin"/>
    <property type="match status" value="1"/>
</dbReference>
<dbReference type="PRINTS" id="PR01077">
    <property type="entry name" value="CLAUDIN"/>
</dbReference>
<dbReference type="PRINTS" id="PR01381">
    <property type="entry name" value="CLAUDIN7"/>
</dbReference>
<dbReference type="PROSITE" id="PS01346">
    <property type="entry name" value="CLAUDIN"/>
    <property type="match status" value="1"/>
</dbReference>
<comment type="function">
    <text evidence="1">Plays a major role in tight junction-specific obliteration of the intercellular space.</text>
</comment>
<comment type="subunit">
    <text evidence="3 5">Directly interacts with TJP1/ZO-1, TJP2/ZO-2 and TJP3/ZO-3 (By similarity). The phosphorylated form interacts with EPCAM (PubMed:16054130).</text>
</comment>
<comment type="subcellular location">
    <subcellularLocation>
        <location evidence="2">Cell membrane</location>
        <topology evidence="4">Multi-pass membrane protein</topology>
    </subcellularLocation>
    <subcellularLocation>
        <location evidence="5">Basolateral cell membrane</location>
    </subcellularLocation>
    <subcellularLocation>
        <location evidence="5">Cell junction</location>
        <location evidence="5">Tight junction</location>
    </subcellularLocation>
    <text>Colocalizes with EPCAM at the basolateral cell membrane and tight junction.</text>
</comment>
<comment type="PTM">
    <text evidence="5">Phosphorylated.</text>
</comment>
<comment type="similarity">
    <text evidence="6">Belongs to the claudin family.</text>
</comment>
<gene>
    <name type="primary">Cldn7</name>
</gene>
<feature type="chain" id="PRO_0000144752" description="Claudin-7">
    <location>
        <begin position="1"/>
        <end position="211"/>
    </location>
</feature>
<feature type="topological domain" description="Cytoplasmic" evidence="4">
    <location>
        <begin position="1"/>
        <end position="7"/>
    </location>
</feature>
<feature type="transmembrane region" description="Helical" evidence="4">
    <location>
        <begin position="8"/>
        <end position="28"/>
    </location>
</feature>
<feature type="topological domain" description="Extracellular" evidence="4">
    <location>
        <begin position="29"/>
        <end position="81"/>
    </location>
</feature>
<feature type="transmembrane region" description="Helical" evidence="4">
    <location>
        <begin position="82"/>
        <end position="102"/>
    </location>
</feature>
<feature type="topological domain" description="Cytoplasmic" evidence="4">
    <location>
        <begin position="103"/>
        <end position="119"/>
    </location>
</feature>
<feature type="transmembrane region" description="Helical" evidence="4">
    <location>
        <begin position="120"/>
        <end position="140"/>
    </location>
</feature>
<feature type="topological domain" description="Extracellular" evidence="4">
    <location>
        <begin position="141"/>
        <end position="160"/>
    </location>
</feature>
<feature type="transmembrane region" description="Helical" evidence="4">
    <location>
        <begin position="161"/>
        <end position="181"/>
    </location>
</feature>
<feature type="topological domain" description="Cytoplasmic" evidence="4">
    <location>
        <begin position="182"/>
        <end position="211"/>
    </location>
</feature>
<feature type="region of interest" description="Interactions with TJP1, TJP2 and TJP3" evidence="1">
    <location>
        <begin position="210"/>
        <end position="211"/>
    </location>
</feature>
<name>CLD7_RAT</name>
<accession>Q9Z1L1</accession>
<accession>Q3T1J0</accession>
<evidence type="ECO:0000250" key="1"/>
<evidence type="ECO:0000250" key="2">
    <source>
        <dbReference type="UniProtKB" id="O95471"/>
    </source>
</evidence>
<evidence type="ECO:0000250" key="3">
    <source>
        <dbReference type="UniProtKB" id="Q9Z261"/>
    </source>
</evidence>
<evidence type="ECO:0000255" key="4"/>
<evidence type="ECO:0000269" key="5">
    <source>
    </source>
</evidence>
<evidence type="ECO:0000305" key="6"/>
<protein>
    <recommendedName>
        <fullName>Claudin-7</fullName>
    </recommendedName>
</protein>
<proteinExistence type="evidence at protein level"/>